<dbReference type="EC" id="1.8.4.10" evidence="1"/>
<dbReference type="EMBL" id="CP000159">
    <property type="protein sequence ID" value="ABC44343.1"/>
    <property type="molecule type" value="Genomic_DNA"/>
</dbReference>
<dbReference type="RefSeq" id="WP_011403200.1">
    <property type="nucleotide sequence ID" value="NC_007677.1"/>
</dbReference>
<dbReference type="RefSeq" id="YP_444567.1">
    <property type="nucleotide sequence ID" value="NC_007677.1"/>
</dbReference>
<dbReference type="SMR" id="Q2S5G4"/>
<dbReference type="STRING" id="309807.SRU_0422"/>
<dbReference type="EnsemblBacteria" id="ABC44343">
    <property type="protein sequence ID" value="ABC44343"/>
    <property type="gene ID" value="SRU_0422"/>
</dbReference>
<dbReference type="KEGG" id="sru:SRU_0422"/>
<dbReference type="PATRIC" id="fig|309807.25.peg.442"/>
<dbReference type="eggNOG" id="COG0175">
    <property type="taxonomic scope" value="Bacteria"/>
</dbReference>
<dbReference type="HOGENOM" id="CLU_044089_2_0_10"/>
<dbReference type="OrthoDB" id="9794018at2"/>
<dbReference type="Proteomes" id="UP000008674">
    <property type="component" value="Chromosome"/>
</dbReference>
<dbReference type="GO" id="GO:0005737">
    <property type="term" value="C:cytoplasm"/>
    <property type="evidence" value="ECO:0007669"/>
    <property type="project" value="UniProtKB-SubCell"/>
</dbReference>
<dbReference type="GO" id="GO:0051539">
    <property type="term" value="F:4 iron, 4 sulfur cluster binding"/>
    <property type="evidence" value="ECO:0007669"/>
    <property type="project" value="UniProtKB-UniRule"/>
</dbReference>
<dbReference type="GO" id="GO:0043866">
    <property type="term" value="F:adenylyl-sulfate reductase (thioredoxin) activity"/>
    <property type="evidence" value="ECO:0007669"/>
    <property type="project" value="UniProtKB-EC"/>
</dbReference>
<dbReference type="GO" id="GO:0046872">
    <property type="term" value="F:metal ion binding"/>
    <property type="evidence" value="ECO:0007669"/>
    <property type="project" value="UniProtKB-KW"/>
</dbReference>
<dbReference type="GO" id="GO:0004604">
    <property type="term" value="F:phosphoadenylyl-sulfate reductase (thioredoxin) activity"/>
    <property type="evidence" value="ECO:0007669"/>
    <property type="project" value="UniProtKB-UniRule"/>
</dbReference>
<dbReference type="GO" id="GO:0070814">
    <property type="term" value="P:hydrogen sulfide biosynthetic process"/>
    <property type="evidence" value="ECO:0007669"/>
    <property type="project" value="UniProtKB-UniRule"/>
</dbReference>
<dbReference type="GO" id="GO:0019379">
    <property type="term" value="P:sulfate assimilation, phosphoadenylyl sulfate reduction by phosphoadenylyl-sulfate reductase (thioredoxin)"/>
    <property type="evidence" value="ECO:0007669"/>
    <property type="project" value="UniProtKB-UniRule"/>
</dbReference>
<dbReference type="CDD" id="cd23945">
    <property type="entry name" value="PAPS_reductase"/>
    <property type="match status" value="1"/>
</dbReference>
<dbReference type="Gene3D" id="3.40.50.620">
    <property type="entry name" value="HUPs"/>
    <property type="match status" value="1"/>
</dbReference>
<dbReference type="HAMAP" id="MF_00063">
    <property type="entry name" value="CysH"/>
    <property type="match status" value="1"/>
</dbReference>
<dbReference type="InterPro" id="IPR004511">
    <property type="entry name" value="PAPS/APS_Rdtase"/>
</dbReference>
<dbReference type="InterPro" id="IPR002500">
    <property type="entry name" value="PAPS_reduct_dom"/>
</dbReference>
<dbReference type="InterPro" id="IPR014729">
    <property type="entry name" value="Rossmann-like_a/b/a_fold"/>
</dbReference>
<dbReference type="NCBIfam" id="TIGR00434">
    <property type="entry name" value="cysH"/>
    <property type="match status" value="1"/>
</dbReference>
<dbReference type="NCBIfam" id="NF002537">
    <property type="entry name" value="PRK02090.1"/>
    <property type="match status" value="1"/>
</dbReference>
<dbReference type="PANTHER" id="PTHR46509">
    <property type="entry name" value="PHOSPHOADENOSINE PHOSPHOSULFATE REDUCTASE"/>
    <property type="match status" value="1"/>
</dbReference>
<dbReference type="PANTHER" id="PTHR46509:SF1">
    <property type="entry name" value="PHOSPHOADENOSINE PHOSPHOSULFATE REDUCTASE"/>
    <property type="match status" value="1"/>
</dbReference>
<dbReference type="Pfam" id="PF01507">
    <property type="entry name" value="PAPS_reduct"/>
    <property type="match status" value="1"/>
</dbReference>
<dbReference type="PIRSF" id="PIRSF000857">
    <property type="entry name" value="PAPS_reductase"/>
    <property type="match status" value="1"/>
</dbReference>
<dbReference type="SUPFAM" id="SSF52402">
    <property type="entry name" value="Adenine nucleotide alpha hydrolases-like"/>
    <property type="match status" value="1"/>
</dbReference>
<accession>Q2S5G4</accession>
<reference key="1">
    <citation type="journal article" date="2005" name="Proc. Natl. Acad. Sci. U.S.A.">
        <title>The genome of Salinibacter ruber: convergence and gene exchange among hyperhalophilic bacteria and archaea.</title>
        <authorList>
            <person name="Mongodin E.F."/>
            <person name="Nelson K.E."/>
            <person name="Daugherty S."/>
            <person name="DeBoy R.T."/>
            <person name="Wister J."/>
            <person name="Khouri H."/>
            <person name="Weidman J."/>
            <person name="Walsh D.A."/>
            <person name="Papke R.T."/>
            <person name="Sanchez Perez G."/>
            <person name="Sharma A.K."/>
            <person name="Nesbo C.L."/>
            <person name="MacLeod D."/>
            <person name="Bapteste E."/>
            <person name="Doolittle W.F."/>
            <person name="Charlebois R.L."/>
            <person name="Legault B."/>
            <person name="Rodriguez-Valera F."/>
        </authorList>
    </citation>
    <scope>NUCLEOTIDE SEQUENCE [LARGE SCALE GENOMIC DNA]</scope>
    <source>
        <strain>DSM 13855 / CECT 5946 / M31</strain>
    </source>
</reference>
<sequence length="252" mass="28593">MAFASDESASPWSSTRLAALNAQFEPHGPKAILNWATHTFGDDLAQGTGFGPSGIVIMHMLADLRPGTTVFYLDTDLLFPETYELCDDLDERLDVDVTRVHGGLSLDEQAEQEGEELWNRNPNRCCFLRKVKPLRNFLDDRRAWITGVRRDQSERRADTDILSWEGQYGVFKINPLANWTQKEVWKYLFEHDLPYNPKHDQGYPSLGCVPCTEPVDQADGYSREGRWSDRDKTECGLHTSPEDEDGAHAAES</sequence>
<gene>
    <name evidence="1" type="primary">cysH</name>
    <name type="ordered locus">SRU_0422</name>
</gene>
<protein>
    <recommendedName>
        <fullName evidence="1">Adenosine 5'-phosphosulfate reductase</fullName>
        <shortName evidence="1">APS reductase</shortName>
        <ecNumber evidence="1">1.8.4.10</ecNumber>
    </recommendedName>
    <alternativeName>
        <fullName evidence="1">5'-adenylylsulfate reductase</fullName>
    </alternativeName>
    <alternativeName>
        <fullName evidence="1">Thioredoxin-dependent 5'-adenylylsulfate reductase</fullName>
    </alternativeName>
</protein>
<organism>
    <name type="scientific">Salinibacter ruber (strain DSM 13855 / M31)</name>
    <dbReference type="NCBI Taxonomy" id="309807"/>
    <lineage>
        <taxon>Bacteria</taxon>
        <taxon>Pseudomonadati</taxon>
        <taxon>Rhodothermota</taxon>
        <taxon>Rhodothermia</taxon>
        <taxon>Rhodothermales</taxon>
        <taxon>Salinibacteraceae</taxon>
        <taxon>Salinibacter</taxon>
    </lineage>
</organism>
<proteinExistence type="inferred from homology"/>
<comment type="function">
    <text evidence="1">Catalyzes the formation of sulfite from adenosine 5'-phosphosulfate (APS) using thioredoxin as an electron donor.</text>
</comment>
<comment type="catalytic activity">
    <reaction evidence="1">
        <text>[thioredoxin]-disulfide + sulfite + AMP + 2 H(+) = adenosine 5'-phosphosulfate + [thioredoxin]-dithiol</text>
        <dbReference type="Rhea" id="RHEA:21976"/>
        <dbReference type="Rhea" id="RHEA-COMP:10698"/>
        <dbReference type="Rhea" id="RHEA-COMP:10700"/>
        <dbReference type="ChEBI" id="CHEBI:15378"/>
        <dbReference type="ChEBI" id="CHEBI:17359"/>
        <dbReference type="ChEBI" id="CHEBI:29950"/>
        <dbReference type="ChEBI" id="CHEBI:50058"/>
        <dbReference type="ChEBI" id="CHEBI:58243"/>
        <dbReference type="ChEBI" id="CHEBI:456215"/>
        <dbReference type="EC" id="1.8.4.10"/>
    </reaction>
</comment>
<comment type="cofactor">
    <cofactor evidence="1">
        <name>[4Fe-4S] cluster</name>
        <dbReference type="ChEBI" id="CHEBI:49883"/>
    </cofactor>
    <text evidence="1">Binds 1 [4Fe-4S] cluster per subunit.</text>
</comment>
<comment type="pathway">
    <text evidence="1">Sulfur metabolism; hydrogen sulfide biosynthesis; sulfite from sulfate.</text>
</comment>
<comment type="subcellular location">
    <subcellularLocation>
        <location evidence="1">Cytoplasm</location>
    </subcellularLocation>
</comment>
<comment type="similarity">
    <text evidence="1">Belongs to the PAPS reductase family. CysH subfamily.</text>
</comment>
<feature type="chain" id="PRO_1000075076" description="Adenosine 5'-phosphosulfate reductase">
    <location>
        <begin position="1"/>
        <end position="252"/>
    </location>
</feature>
<feature type="region of interest" description="Disordered" evidence="2">
    <location>
        <begin position="219"/>
        <end position="252"/>
    </location>
</feature>
<feature type="compositionally biased region" description="Basic and acidic residues" evidence="2">
    <location>
        <begin position="221"/>
        <end position="235"/>
    </location>
</feature>
<feature type="active site" description="Nucleophile; cysteine thiosulfonate intermediate" evidence="1">
    <location>
        <position position="235"/>
    </location>
</feature>
<feature type="binding site" evidence="1">
    <location>
        <position position="125"/>
    </location>
    <ligand>
        <name>[4Fe-4S] cluster</name>
        <dbReference type="ChEBI" id="CHEBI:49883"/>
    </ligand>
</feature>
<feature type="binding site" evidence="1">
    <location>
        <position position="126"/>
    </location>
    <ligand>
        <name>[4Fe-4S] cluster</name>
        <dbReference type="ChEBI" id="CHEBI:49883"/>
    </ligand>
</feature>
<feature type="binding site" evidence="1">
    <location>
        <position position="208"/>
    </location>
    <ligand>
        <name>[4Fe-4S] cluster</name>
        <dbReference type="ChEBI" id="CHEBI:49883"/>
    </ligand>
</feature>
<feature type="binding site" evidence="1">
    <location>
        <position position="211"/>
    </location>
    <ligand>
        <name>[4Fe-4S] cluster</name>
        <dbReference type="ChEBI" id="CHEBI:49883"/>
    </ligand>
</feature>
<keyword id="KW-0963">Cytoplasm</keyword>
<keyword id="KW-0408">Iron</keyword>
<keyword id="KW-0411">Iron-sulfur</keyword>
<keyword id="KW-0479">Metal-binding</keyword>
<keyword id="KW-0560">Oxidoreductase</keyword>
<keyword id="KW-1185">Reference proteome</keyword>
<evidence type="ECO:0000255" key="1">
    <source>
        <dbReference type="HAMAP-Rule" id="MF_00063"/>
    </source>
</evidence>
<evidence type="ECO:0000256" key="2">
    <source>
        <dbReference type="SAM" id="MobiDB-lite"/>
    </source>
</evidence>
<name>CYSH_SALRD</name>